<name>BTUC_SALG2</name>
<evidence type="ECO:0000255" key="1">
    <source>
        <dbReference type="HAMAP-Rule" id="MF_01004"/>
    </source>
</evidence>
<reference key="1">
    <citation type="journal article" date="2008" name="Genome Res.">
        <title>Comparative genome analysis of Salmonella enteritidis PT4 and Salmonella gallinarum 287/91 provides insights into evolutionary and host adaptation pathways.</title>
        <authorList>
            <person name="Thomson N.R."/>
            <person name="Clayton D.J."/>
            <person name="Windhorst D."/>
            <person name="Vernikos G."/>
            <person name="Davidson S."/>
            <person name="Churcher C."/>
            <person name="Quail M.A."/>
            <person name="Stevens M."/>
            <person name="Jones M.A."/>
            <person name="Watson M."/>
            <person name="Barron A."/>
            <person name="Layton A."/>
            <person name="Pickard D."/>
            <person name="Kingsley R.A."/>
            <person name="Bignell A."/>
            <person name="Clark L."/>
            <person name="Harris B."/>
            <person name="Ormond D."/>
            <person name="Abdellah Z."/>
            <person name="Brooks K."/>
            <person name="Cherevach I."/>
            <person name="Chillingworth T."/>
            <person name="Woodward J."/>
            <person name="Norberczak H."/>
            <person name="Lord A."/>
            <person name="Arrowsmith C."/>
            <person name="Jagels K."/>
            <person name="Moule S."/>
            <person name="Mungall K."/>
            <person name="Saunders M."/>
            <person name="Whitehead S."/>
            <person name="Chabalgoity J.A."/>
            <person name="Maskell D."/>
            <person name="Humphreys T."/>
            <person name="Roberts M."/>
            <person name="Barrow P.A."/>
            <person name="Dougan G."/>
            <person name="Parkhill J."/>
        </authorList>
    </citation>
    <scope>NUCLEOTIDE SEQUENCE [LARGE SCALE GENOMIC DNA]</scope>
    <source>
        <strain>287/91 / NCTC 13346</strain>
    </source>
</reference>
<keyword id="KW-0997">Cell inner membrane</keyword>
<keyword id="KW-1003">Cell membrane</keyword>
<keyword id="KW-0472">Membrane</keyword>
<keyword id="KW-0812">Transmembrane</keyword>
<keyword id="KW-1133">Transmembrane helix</keyword>
<keyword id="KW-0813">Transport</keyword>
<proteinExistence type="inferred from homology"/>
<accession>B5RAW6</accession>
<organism>
    <name type="scientific">Salmonella gallinarum (strain 287/91 / NCTC 13346)</name>
    <dbReference type="NCBI Taxonomy" id="550538"/>
    <lineage>
        <taxon>Bacteria</taxon>
        <taxon>Pseudomonadati</taxon>
        <taxon>Pseudomonadota</taxon>
        <taxon>Gammaproteobacteria</taxon>
        <taxon>Enterobacterales</taxon>
        <taxon>Enterobacteriaceae</taxon>
        <taxon>Salmonella</taxon>
    </lineage>
</organism>
<dbReference type="EMBL" id="AM933173">
    <property type="protein sequence ID" value="CAR37634.1"/>
    <property type="molecule type" value="Genomic_DNA"/>
</dbReference>
<dbReference type="RefSeq" id="WP_000954982.1">
    <property type="nucleotide sequence ID" value="NC_011274.1"/>
</dbReference>
<dbReference type="SMR" id="B5RAW6"/>
<dbReference type="KEGG" id="seg:SG1777"/>
<dbReference type="HOGENOM" id="CLU_013016_0_3_6"/>
<dbReference type="Proteomes" id="UP000008321">
    <property type="component" value="Chromosome"/>
</dbReference>
<dbReference type="GO" id="GO:0005886">
    <property type="term" value="C:plasma membrane"/>
    <property type="evidence" value="ECO:0007669"/>
    <property type="project" value="UniProtKB-SubCell"/>
</dbReference>
<dbReference type="GO" id="GO:0090482">
    <property type="term" value="F:vitamin transmembrane transporter activity"/>
    <property type="evidence" value="ECO:0007669"/>
    <property type="project" value="UniProtKB-UniRule"/>
</dbReference>
<dbReference type="GO" id="GO:0015889">
    <property type="term" value="P:cobalamin transport"/>
    <property type="evidence" value="ECO:0007669"/>
    <property type="project" value="UniProtKB-UniRule"/>
</dbReference>
<dbReference type="CDD" id="cd06550">
    <property type="entry name" value="TM_ABC_iron-siderophores_like"/>
    <property type="match status" value="1"/>
</dbReference>
<dbReference type="FunFam" id="1.10.3470.10:FF:000001">
    <property type="entry name" value="Vitamin B12 ABC transporter permease BtuC"/>
    <property type="match status" value="1"/>
</dbReference>
<dbReference type="Gene3D" id="1.10.3470.10">
    <property type="entry name" value="ABC transporter involved in vitamin B12 uptake, BtuC"/>
    <property type="match status" value="1"/>
</dbReference>
<dbReference type="HAMAP" id="MF_01004">
    <property type="entry name" value="BtuC"/>
    <property type="match status" value="1"/>
</dbReference>
<dbReference type="InterPro" id="IPR037294">
    <property type="entry name" value="ABC_BtuC-like"/>
</dbReference>
<dbReference type="InterPro" id="IPR023691">
    <property type="entry name" value="ABC_transptr_BtuC"/>
</dbReference>
<dbReference type="InterPro" id="IPR000522">
    <property type="entry name" value="ABC_transptr_permease_BtuC"/>
</dbReference>
<dbReference type="NCBIfam" id="NF003001">
    <property type="entry name" value="PRK03784.1"/>
    <property type="match status" value="1"/>
</dbReference>
<dbReference type="PANTHER" id="PTHR30472">
    <property type="entry name" value="FERRIC ENTEROBACTIN TRANSPORT SYSTEM PERMEASE PROTEIN"/>
    <property type="match status" value="1"/>
</dbReference>
<dbReference type="PANTHER" id="PTHR30472:SF29">
    <property type="entry name" value="VITAMIN B12 IMPORT SYSTEM PERMEASE PROTEIN BTUC"/>
    <property type="match status" value="1"/>
</dbReference>
<dbReference type="Pfam" id="PF01032">
    <property type="entry name" value="FecCD"/>
    <property type="match status" value="1"/>
</dbReference>
<dbReference type="SUPFAM" id="SSF81345">
    <property type="entry name" value="ABC transporter involved in vitamin B12 uptake, BtuC"/>
    <property type="match status" value="1"/>
</dbReference>
<protein>
    <recommendedName>
        <fullName evidence="1">Vitamin B12 import system permease protein BtuC</fullName>
    </recommendedName>
</protein>
<gene>
    <name evidence="1" type="primary">btuC</name>
    <name type="ordered locus">SG1777</name>
</gene>
<feature type="chain" id="PRO_1000201554" description="Vitamin B12 import system permease protein BtuC">
    <location>
        <begin position="1"/>
        <end position="326"/>
    </location>
</feature>
<feature type="transmembrane region" description="Helical" evidence="1">
    <location>
        <begin position="15"/>
        <end position="35"/>
    </location>
</feature>
<feature type="transmembrane region" description="Helical" evidence="1">
    <location>
        <begin position="61"/>
        <end position="81"/>
    </location>
</feature>
<feature type="transmembrane region" description="Helical" evidence="1">
    <location>
        <begin position="88"/>
        <end position="108"/>
    </location>
</feature>
<feature type="transmembrane region" description="Helical" evidence="1">
    <location>
        <begin position="112"/>
        <end position="132"/>
    </location>
</feature>
<feature type="transmembrane region" description="Helical" evidence="1">
    <location>
        <begin position="146"/>
        <end position="166"/>
    </location>
</feature>
<feature type="transmembrane region" description="Helical" evidence="1">
    <location>
        <begin position="184"/>
        <end position="204"/>
    </location>
</feature>
<feature type="transmembrane region" description="Helical" evidence="1">
    <location>
        <begin position="240"/>
        <end position="260"/>
    </location>
</feature>
<feature type="transmembrane region" description="Helical" evidence="1">
    <location>
        <begin position="274"/>
        <end position="294"/>
    </location>
</feature>
<feature type="transmembrane region" description="Helical" evidence="1">
    <location>
        <begin position="302"/>
        <end position="322"/>
    </location>
</feature>
<comment type="function">
    <text evidence="1">Part of the ABC transporter complex BtuCDF involved in vitamin B12 import. Involved in the translocation of the substrate across the membrane.</text>
</comment>
<comment type="subunit">
    <text evidence="1">The complex is composed of two ATP-binding proteins (BtuD), two transmembrane proteins (BtuC) and a solute-binding protein (BtuF).</text>
</comment>
<comment type="subcellular location">
    <subcellularLocation>
        <location evidence="1">Cell inner membrane</location>
        <topology evidence="1">Multi-pass membrane protein</topology>
    </subcellularLocation>
</comment>
<comment type="similarity">
    <text evidence="1">Belongs to the binding-protein-dependent transport system permease family. FecCD subfamily.</text>
</comment>
<sequence>MLTFARQQQRRNVRWLLSLSLLVLLATLLSLCAGEQWIAPGDWLSARGELFVWQIRLPRTLAVLLVGAALALSGAVMQALFENPLAEPGLLGVSNGAGVGLIAAVLLGQGQLPGWALGLCAIAGALIITLILLRFARRHLSTSRLLLAGVALGIICSALMTWAIYFSTSFDLRQLMYWMMGGFGGVDWQQSWLMIALIPVLIWICCQSQPLNMLALGETSARQLGLPLWFWRNLLVIATGWMVGVSVAMAGAIGFIGLVIPHILRLCGLTDHRVLLPGCALAGAIALLLADVVARLALASAELPIGVVTATLGAPVFIWLLLKSAR</sequence>